<keyword id="KW-1003">Cell membrane</keyword>
<keyword id="KW-0472">Membrane</keyword>
<keyword id="KW-1185">Reference proteome</keyword>
<keyword id="KW-0812">Transmembrane</keyword>
<keyword id="KW-1133">Transmembrane helix</keyword>
<dbReference type="EMBL" id="AE014075">
    <property type="protein sequence ID" value="AAN81667.1"/>
    <property type="molecule type" value="Genomic_DNA"/>
</dbReference>
<dbReference type="RefSeq" id="WP_000508177.1">
    <property type="nucleotide sequence ID" value="NZ_CP051263.1"/>
</dbReference>
<dbReference type="SMR" id="P0AE43"/>
<dbReference type="STRING" id="199310.c3215"/>
<dbReference type="KEGG" id="ecc:c3215"/>
<dbReference type="eggNOG" id="COG0401">
    <property type="taxonomic scope" value="Bacteria"/>
</dbReference>
<dbReference type="HOGENOM" id="CLU_107649_7_1_6"/>
<dbReference type="BioCyc" id="ECOL199310:C3215-MONOMER"/>
<dbReference type="Proteomes" id="UP000001410">
    <property type="component" value="Chromosome"/>
</dbReference>
<dbReference type="GO" id="GO:0005886">
    <property type="term" value="C:plasma membrane"/>
    <property type="evidence" value="ECO:0007669"/>
    <property type="project" value="UniProtKB-SubCell"/>
</dbReference>
<dbReference type="InterPro" id="IPR000612">
    <property type="entry name" value="PMP3"/>
</dbReference>
<dbReference type="PANTHER" id="PTHR21659">
    <property type="entry name" value="HYDROPHOBIC PROTEIN RCI2 LOW TEMPERATURE AND SALT RESPONSIVE PROTEIN LTI6 -RELATED"/>
    <property type="match status" value="1"/>
</dbReference>
<dbReference type="PANTHER" id="PTHR21659:SF42">
    <property type="entry name" value="UPF0057 MEMBRANE PROTEIN ZK632.10-RELATED"/>
    <property type="match status" value="1"/>
</dbReference>
<dbReference type="Pfam" id="PF01679">
    <property type="entry name" value="Pmp3"/>
    <property type="match status" value="1"/>
</dbReference>
<dbReference type="PROSITE" id="PS01309">
    <property type="entry name" value="UPF0057"/>
    <property type="match status" value="1"/>
</dbReference>
<sequence>MGFWRIVITIILPPLGVLLGKGFGWAFIINILLTLLGYIPGLIHAFWVQTRD</sequence>
<protein>
    <recommendedName>
        <fullName>UPF0057 membrane protein YqaE</fullName>
    </recommendedName>
</protein>
<name>YQAE_ECOL6</name>
<feature type="chain" id="PRO_0000193999" description="UPF0057 membrane protein YqaE">
    <location>
        <begin position="1"/>
        <end position="52"/>
    </location>
</feature>
<feature type="transmembrane region" description="Helical" evidence="1">
    <location>
        <begin position="1"/>
        <end position="21"/>
    </location>
</feature>
<feature type="transmembrane region" description="Helical" evidence="1">
    <location>
        <begin position="23"/>
        <end position="43"/>
    </location>
</feature>
<organism>
    <name type="scientific">Escherichia coli O6:H1 (strain CFT073 / ATCC 700928 / UPEC)</name>
    <dbReference type="NCBI Taxonomy" id="199310"/>
    <lineage>
        <taxon>Bacteria</taxon>
        <taxon>Pseudomonadati</taxon>
        <taxon>Pseudomonadota</taxon>
        <taxon>Gammaproteobacteria</taxon>
        <taxon>Enterobacterales</taxon>
        <taxon>Enterobacteriaceae</taxon>
        <taxon>Escherichia</taxon>
    </lineage>
</organism>
<gene>
    <name type="primary">yqaE</name>
    <name type="ordered locus">c3215</name>
</gene>
<comment type="subcellular location">
    <subcellularLocation>
        <location evidence="2">Cell membrane</location>
        <topology evidence="2">Multi-pass membrane protein</topology>
    </subcellularLocation>
</comment>
<comment type="similarity">
    <text evidence="2">Belongs to the UPF0057 (PMP3) family.</text>
</comment>
<evidence type="ECO:0000255" key="1"/>
<evidence type="ECO:0000305" key="2"/>
<proteinExistence type="inferred from homology"/>
<accession>P0AE43</accession>
<accession>P77240</accession>
<reference key="1">
    <citation type="journal article" date="2002" name="Proc. Natl. Acad. Sci. U.S.A.">
        <title>Extensive mosaic structure revealed by the complete genome sequence of uropathogenic Escherichia coli.</title>
        <authorList>
            <person name="Welch R.A."/>
            <person name="Burland V."/>
            <person name="Plunkett G. III"/>
            <person name="Redford P."/>
            <person name="Roesch P."/>
            <person name="Rasko D."/>
            <person name="Buckles E.L."/>
            <person name="Liou S.-R."/>
            <person name="Boutin A."/>
            <person name="Hackett J."/>
            <person name="Stroud D."/>
            <person name="Mayhew G.F."/>
            <person name="Rose D.J."/>
            <person name="Zhou S."/>
            <person name="Schwartz D.C."/>
            <person name="Perna N.T."/>
            <person name="Mobley H.L.T."/>
            <person name="Donnenberg M.S."/>
            <person name="Blattner F.R."/>
        </authorList>
    </citation>
    <scope>NUCLEOTIDE SEQUENCE [LARGE SCALE GENOMIC DNA]</scope>
    <source>
        <strain>CFT073 / ATCC 700928 / UPEC</strain>
    </source>
</reference>